<comment type="function">
    <text evidence="1">Catalyzes the NAD-dependent reduction of succinylglutamate semialdehyde into succinylglutamate.</text>
</comment>
<comment type="catalytic activity">
    <reaction evidence="1">
        <text>N-succinyl-L-glutamate 5-semialdehyde + NAD(+) + H2O = N-succinyl-L-glutamate + NADH + 2 H(+)</text>
        <dbReference type="Rhea" id="RHEA:10812"/>
        <dbReference type="ChEBI" id="CHEBI:15377"/>
        <dbReference type="ChEBI" id="CHEBI:15378"/>
        <dbReference type="ChEBI" id="CHEBI:57540"/>
        <dbReference type="ChEBI" id="CHEBI:57945"/>
        <dbReference type="ChEBI" id="CHEBI:58520"/>
        <dbReference type="ChEBI" id="CHEBI:58763"/>
        <dbReference type="EC" id="1.2.1.71"/>
    </reaction>
</comment>
<comment type="pathway">
    <text evidence="1">Amino-acid degradation; L-arginine degradation via AST pathway; L-glutamate and succinate from L-arginine: step 4/5.</text>
</comment>
<comment type="similarity">
    <text evidence="1">Belongs to the aldehyde dehydrogenase family. AstD subfamily.</text>
</comment>
<accession>A6T7T5</accession>
<name>ASTD_KLEP7</name>
<evidence type="ECO:0000255" key="1">
    <source>
        <dbReference type="HAMAP-Rule" id="MF_01174"/>
    </source>
</evidence>
<sequence>MSLWINGEWRPGRGPGFSKQDPVNLKVVWQGEAADAGQVAEAVAAARQAFPSWARLPFAARQAIVEKFAALLEASKAELTAVIGAETGKPRWEAAGEVTAMINKVAISVKAYHVRTGEQHSDLPDGAATLRHRPHGVLAVFGPYNFPGHLPNGHIVPALLAGNTVVFKPSELTPRSGEAVVKLWQQAGLPAGVLNLVQGGRETGEALSGQADIDGLLFTGSSTTGFHLHRQLAGQPQKILALEMGGNNPLIVDDPRDVDAVVHLTIQSAFITAGQRCTCARRLLVRRGEAGDAFLSRLVTVSQRLIPAAWDAEPQPFLGGLISEQAAQKVHQAWLQRVAAGAVTLLEPRLLQAGTSLLTPGIVDMSDVANVEDEEVFGPLLGVWRYDTFEEAIALANATRFGLSCGLISPEREKFDRLLLEARAGIVNWNKPLTGAASTAPFGGTGASGNHRPGAWYAADYCAWPMASLESPTLTLPASLSPGLDFLAGEAS</sequence>
<gene>
    <name evidence="1" type="primary">astD</name>
    <name type="ordered locus">KPN78578_11950</name>
    <name type="ORF">KPN_01223</name>
</gene>
<feature type="chain" id="PRO_1000065758" description="N-succinylglutamate 5-semialdehyde dehydrogenase">
    <location>
        <begin position="1"/>
        <end position="492"/>
    </location>
</feature>
<feature type="active site" evidence="1">
    <location>
        <position position="243"/>
    </location>
</feature>
<feature type="active site" evidence="1">
    <location>
        <position position="277"/>
    </location>
</feature>
<feature type="binding site" evidence="1">
    <location>
        <begin position="220"/>
        <end position="225"/>
    </location>
    <ligand>
        <name>NAD(+)</name>
        <dbReference type="ChEBI" id="CHEBI:57540"/>
    </ligand>
</feature>
<organism>
    <name type="scientific">Klebsiella pneumoniae subsp. pneumoniae (strain ATCC 700721 / MGH 78578)</name>
    <dbReference type="NCBI Taxonomy" id="272620"/>
    <lineage>
        <taxon>Bacteria</taxon>
        <taxon>Pseudomonadati</taxon>
        <taxon>Pseudomonadota</taxon>
        <taxon>Gammaproteobacteria</taxon>
        <taxon>Enterobacterales</taxon>
        <taxon>Enterobacteriaceae</taxon>
        <taxon>Klebsiella/Raoultella group</taxon>
        <taxon>Klebsiella</taxon>
        <taxon>Klebsiella pneumoniae complex</taxon>
    </lineage>
</organism>
<keyword id="KW-0056">Arginine metabolism</keyword>
<keyword id="KW-0520">NAD</keyword>
<keyword id="KW-0560">Oxidoreductase</keyword>
<protein>
    <recommendedName>
        <fullName evidence="1">N-succinylglutamate 5-semialdehyde dehydrogenase</fullName>
        <ecNumber evidence="1">1.2.1.71</ecNumber>
    </recommendedName>
    <alternativeName>
        <fullName evidence="1">Succinylglutamic semialdehyde dehydrogenase</fullName>
        <shortName evidence="1">SGSD</shortName>
    </alternativeName>
</protein>
<reference key="1">
    <citation type="submission" date="2006-09" db="EMBL/GenBank/DDBJ databases">
        <authorList>
            <consortium name="The Klebsiella pneumonia Genome Sequencing Project"/>
            <person name="McClelland M."/>
            <person name="Sanderson E.K."/>
            <person name="Spieth J."/>
            <person name="Clifton W.S."/>
            <person name="Latreille P."/>
            <person name="Sabo A."/>
            <person name="Pepin K."/>
            <person name="Bhonagiri V."/>
            <person name="Porwollik S."/>
            <person name="Ali J."/>
            <person name="Wilson R.K."/>
        </authorList>
    </citation>
    <scope>NUCLEOTIDE SEQUENCE [LARGE SCALE GENOMIC DNA]</scope>
    <source>
        <strain>ATCC 700721 / MGH 78578</strain>
    </source>
</reference>
<dbReference type="EC" id="1.2.1.71" evidence="1"/>
<dbReference type="EMBL" id="CP000647">
    <property type="protein sequence ID" value="ABR76656.1"/>
    <property type="molecule type" value="Genomic_DNA"/>
</dbReference>
<dbReference type="RefSeq" id="WP_015958217.1">
    <property type="nucleotide sequence ID" value="NC_009648.1"/>
</dbReference>
<dbReference type="SMR" id="A6T7T5"/>
<dbReference type="STRING" id="272620.KPN_01223"/>
<dbReference type="PaxDb" id="272620-KPN_01223"/>
<dbReference type="EnsemblBacteria" id="ABR76656">
    <property type="protein sequence ID" value="ABR76656"/>
    <property type="gene ID" value="KPN_01223"/>
</dbReference>
<dbReference type="KEGG" id="kpn:KPN_01223"/>
<dbReference type="HOGENOM" id="CLU_005391_1_0_6"/>
<dbReference type="UniPathway" id="UPA00185">
    <property type="reaction ID" value="UER00282"/>
</dbReference>
<dbReference type="Proteomes" id="UP000000265">
    <property type="component" value="Chromosome"/>
</dbReference>
<dbReference type="GO" id="GO:0043824">
    <property type="term" value="F:succinylglutamate-semialdehyde dehydrogenase activity"/>
    <property type="evidence" value="ECO:0007669"/>
    <property type="project" value="UniProtKB-EC"/>
</dbReference>
<dbReference type="GO" id="GO:0019544">
    <property type="term" value="P:arginine catabolic process to glutamate"/>
    <property type="evidence" value="ECO:0007669"/>
    <property type="project" value="UniProtKB-UniRule"/>
</dbReference>
<dbReference type="GO" id="GO:0019545">
    <property type="term" value="P:arginine catabolic process to succinate"/>
    <property type="evidence" value="ECO:0007669"/>
    <property type="project" value="UniProtKB-UniRule"/>
</dbReference>
<dbReference type="CDD" id="cd07095">
    <property type="entry name" value="ALDH_SGSD_AstD"/>
    <property type="match status" value="1"/>
</dbReference>
<dbReference type="FunFam" id="3.40.309.10:FF:000013">
    <property type="entry name" value="N-succinylglutamate 5-semialdehyde dehydrogenase"/>
    <property type="match status" value="1"/>
</dbReference>
<dbReference type="FunFam" id="3.40.605.10:FF:000010">
    <property type="entry name" value="N-succinylglutamate 5-semialdehyde dehydrogenase"/>
    <property type="match status" value="1"/>
</dbReference>
<dbReference type="Gene3D" id="3.40.605.10">
    <property type="entry name" value="Aldehyde Dehydrogenase, Chain A, domain 1"/>
    <property type="match status" value="1"/>
</dbReference>
<dbReference type="Gene3D" id="3.40.309.10">
    <property type="entry name" value="Aldehyde Dehydrogenase, Chain A, domain 2"/>
    <property type="match status" value="1"/>
</dbReference>
<dbReference type="HAMAP" id="MF_01174">
    <property type="entry name" value="Aldedh_AstD"/>
    <property type="match status" value="1"/>
</dbReference>
<dbReference type="InterPro" id="IPR016161">
    <property type="entry name" value="Ald_DH/histidinol_DH"/>
</dbReference>
<dbReference type="InterPro" id="IPR016163">
    <property type="entry name" value="Ald_DH_C"/>
</dbReference>
<dbReference type="InterPro" id="IPR016160">
    <property type="entry name" value="Ald_DH_CS_CYS"/>
</dbReference>
<dbReference type="InterPro" id="IPR029510">
    <property type="entry name" value="Ald_DH_CS_GLU"/>
</dbReference>
<dbReference type="InterPro" id="IPR016162">
    <property type="entry name" value="Ald_DH_N"/>
</dbReference>
<dbReference type="InterPro" id="IPR015590">
    <property type="entry name" value="Aldehyde_DH_dom"/>
</dbReference>
<dbReference type="InterPro" id="IPR050740">
    <property type="entry name" value="Aldehyde_DH_Superfamily"/>
</dbReference>
<dbReference type="InterPro" id="IPR017649">
    <property type="entry name" value="SuccinylGlu_semiald_DH_AstD"/>
</dbReference>
<dbReference type="NCBIfam" id="TIGR03240">
    <property type="entry name" value="arg_catab_astD"/>
    <property type="match status" value="1"/>
</dbReference>
<dbReference type="NCBIfam" id="NF006992">
    <property type="entry name" value="PRK09457.1"/>
    <property type="match status" value="1"/>
</dbReference>
<dbReference type="PANTHER" id="PTHR43353">
    <property type="entry name" value="SUCCINATE-SEMIALDEHYDE DEHYDROGENASE, MITOCHONDRIAL"/>
    <property type="match status" value="1"/>
</dbReference>
<dbReference type="PANTHER" id="PTHR43353:SF5">
    <property type="entry name" value="SUCCINATE-SEMIALDEHYDE DEHYDROGENASE, MITOCHONDRIAL"/>
    <property type="match status" value="1"/>
</dbReference>
<dbReference type="Pfam" id="PF00171">
    <property type="entry name" value="Aldedh"/>
    <property type="match status" value="1"/>
</dbReference>
<dbReference type="SUPFAM" id="SSF53720">
    <property type="entry name" value="ALDH-like"/>
    <property type="match status" value="1"/>
</dbReference>
<dbReference type="PROSITE" id="PS00070">
    <property type="entry name" value="ALDEHYDE_DEHYDR_CYS"/>
    <property type="match status" value="1"/>
</dbReference>
<dbReference type="PROSITE" id="PS00687">
    <property type="entry name" value="ALDEHYDE_DEHYDR_GLU"/>
    <property type="match status" value="1"/>
</dbReference>
<proteinExistence type="inferred from homology"/>